<comment type="function">
    <text evidence="1">Succinyl-CoA synthetase functions in the citric acid cycle (TCA), coupling the hydrolysis of succinyl-CoA to the synthesis of either ATP or GTP and thus represents the only step of substrate-level phosphorylation in the TCA. The beta subunit provides nucleotide specificity of the enzyme and binds the substrate succinate, while the binding sites for coenzyme A and phosphate are found in the alpha subunit.</text>
</comment>
<comment type="catalytic activity">
    <reaction evidence="1">
        <text>succinate + ATP + CoA = succinyl-CoA + ADP + phosphate</text>
        <dbReference type="Rhea" id="RHEA:17661"/>
        <dbReference type="ChEBI" id="CHEBI:30031"/>
        <dbReference type="ChEBI" id="CHEBI:30616"/>
        <dbReference type="ChEBI" id="CHEBI:43474"/>
        <dbReference type="ChEBI" id="CHEBI:57287"/>
        <dbReference type="ChEBI" id="CHEBI:57292"/>
        <dbReference type="ChEBI" id="CHEBI:456216"/>
        <dbReference type="EC" id="6.2.1.5"/>
    </reaction>
    <physiologicalReaction direction="right-to-left" evidence="1">
        <dbReference type="Rhea" id="RHEA:17663"/>
    </physiologicalReaction>
</comment>
<comment type="catalytic activity">
    <reaction evidence="1">
        <text>GTP + succinate + CoA = succinyl-CoA + GDP + phosphate</text>
        <dbReference type="Rhea" id="RHEA:22120"/>
        <dbReference type="ChEBI" id="CHEBI:30031"/>
        <dbReference type="ChEBI" id="CHEBI:37565"/>
        <dbReference type="ChEBI" id="CHEBI:43474"/>
        <dbReference type="ChEBI" id="CHEBI:57287"/>
        <dbReference type="ChEBI" id="CHEBI:57292"/>
        <dbReference type="ChEBI" id="CHEBI:58189"/>
    </reaction>
    <physiologicalReaction direction="right-to-left" evidence="1">
        <dbReference type="Rhea" id="RHEA:22122"/>
    </physiologicalReaction>
</comment>
<comment type="cofactor">
    <cofactor evidence="1">
        <name>Mg(2+)</name>
        <dbReference type="ChEBI" id="CHEBI:18420"/>
    </cofactor>
    <text evidence="1">Binds 1 Mg(2+) ion per subunit.</text>
</comment>
<comment type="pathway">
    <text evidence="1">Carbohydrate metabolism; tricarboxylic acid cycle; succinate from succinyl-CoA (ligase route): step 1/1.</text>
</comment>
<comment type="subunit">
    <text evidence="1">Heterotetramer of two alpha and two beta subunits.</text>
</comment>
<comment type="similarity">
    <text evidence="1">Belongs to the succinate/malate CoA ligase beta subunit family.</text>
</comment>
<gene>
    <name evidence="1" type="primary">sucC</name>
    <name type="ordered locus">BceJ2315_09460</name>
    <name type="ORF">BCAL0956</name>
</gene>
<reference key="1">
    <citation type="journal article" date="2009" name="J. Bacteriol.">
        <title>The genome of Burkholderia cenocepacia J2315, an epidemic pathogen of cystic fibrosis patients.</title>
        <authorList>
            <person name="Holden M.T."/>
            <person name="Seth-Smith H.M."/>
            <person name="Crossman L.C."/>
            <person name="Sebaihia M."/>
            <person name="Bentley S.D."/>
            <person name="Cerdeno-Tarraga A.M."/>
            <person name="Thomson N.R."/>
            <person name="Bason N."/>
            <person name="Quail M.A."/>
            <person name="Sharp S."/>
            <person name="Cherevach I."/>
            <person name="Churcher C."/>
            <person name="Goodhead I."/>
            <person name="Hauser H."/>
            <person name="Holroyd N."/>
            <person name="Mungall K."/>
            <person name="Scott P."/>
            <person name="Walker D."/>
            <person name="White B."/>
            <person name="Rose H."/>
            <person name="Iversen P."/>
            <person name="Mil-Homens D."/>
            <person name="Rocha E.P."/>
            <person name="Fialho A.M."/>
            <person name="Baldwin A."/>
            <person name="Dowson C."/>
            <person name="Barrell B.G."/>
            <person name="Govan J.R."/>
            <person name="Vandamme P."/>
            <person name="Hart C.A."/>
            <person name="Mahenthiralingam E."/>
            <person name="Parkhill J."/>
        </authorList>
    </citation>
    <scope>NUCLEOTIDE SEQUENCE [LARGE SCALE GENOMIC DNA]</scope>
    <source>
        <strain>ATCC BAA-245 / DSM 16553 / LMG 16656 / NCTC 13227 / J2315 / CF5610</strain>
    </source>
</reference>
<organism>
    <name type="scientific">Burkholderia cenocepacia (strain ATCC BAA-245 / DSM 16553 / LMG 16656 / NCTC 13227 / J2315 / CF5610)</name>
    <name type="common">Burkholderia cepacia (strain J2315)</name>
    <dbReference type="NCBI Taxonomy" id="216591"/>
    <lineage>
        <taxon>Bacteria</taxon>
        <taxon>Pseudomonadati</taxon>
        <taxon>Pseudomonadota</taxon>
        <taxon>Betaproteobacteria</taxon>
        <taxon>Burkholderiales</taxon>
        <taxon>Burkholderiaceae</taxon>
        <taxon>Burkholderia</taxon>
        <taxon>Burkholderia cepacia complex</taxon>
    </lineage>
</organism>
<feature type="chain" id="PRO_1000129167" description="Succinate--CoA ligase [ADP-forming] subunit beta">
    <location>
        <begin position="1"/>
        <end position="388"/>
    </location>
</feature>
<feature type="domain" description="ATP-grasp" evidence="1">
    <location>
        <begin position="9"/>
        <end position="244"/>
    </location>
</feature>
<feature type="binding site" evidence="1">
    <location>
        <position position="46"/>
    </location>
    <ligand>
        <name>ATP</name>
        <dbReference type="ChEBI" id="CHEBI:30616"/>
    </ligand>
</feature>
<feature type="binding site" evidence="1">
    <location>
        <begin position="53"/>
        <end position="55"/>
    </location>
    <ligand>
        <name>ATP</name>
        <dbReference type="ChEBI" id="CHEBI:30616"/>
    </ligand>
</feature>
<feature type="binding site" evidence="1">
    <location>
        <position position="99"/>
    </location>
    <ligand>
        <name>ATP</name>
        <dbReference type="ChEBI" id="CHEBI:30616"/>
    </ligand>
</feature>
<feature type="binding site" evidence="1">
    <location>
        <position position="102"/>
    </location>
    <ligand>
        <name>ATP</name>
        <dbReference type="ChEBI" id="CHEBI:30616"/>
    </ligand>
</feature>
<feature type="binding site" evidence="1">
    <location>
        <position position="107"/>
    </location>
    <ligand>
        <name>ATP</name>
        <dbReference type="ChEBI" id="CHEBI:30616"/>
    </ligand>
</feature>
<feature type="binding site" evidence="1">
    <location>
        <position position="199"/>
    </location>
    <ligand>
        <name>Mg(2+)</name>
        <dbReference type="ChEBI" id="CHEBI:18420"/>
    </ligand>
</feature>
<feature type="binding site" evidence="1">
    <location>
        <position position="213"/>
    </location>
    <ligand>
        <name>Mg(2+)</name>
        <dbReference type="ChEBI" id="CHEBI:18420"/>
    </ligand>
</feature>
<feature type="binding site" evidence="1">
    <location>
        <position position="264"/>
    </location>
    <ligand>
        <name>substrate</name>
        <note>ligand shared with subunit alpha</note>
    </ligand>
</feature>
<feature type="binding site" evidence="1">
    <location>
        <begin position="321"/>
        <end position="323"/>
    </location>
    <ligand>
        <name>substrate</name>
        <note>ligand shared with subunit alpha</note>
    </ligand>
</feature>
<dbReference type="EC" id="6.2.1.5" evidence="1"/>
<dbReference type="EMBL" id="AM747720">
    <property type="protein sequence ID" value="CAR51263.1"/>
    <property type="molecule type" value="Genomic_DNA"/>
</dbReference>
<dbReference type="RefSeq" id="WP_006491644.1">
    <property type="nucleotide sequence ID" value="NC_011000.1"/>
</dbReference>
<dbReference type="SMR" id="B4EBY6"/>
<dbReference type="GeneID" id="56559230"/>
<dbReference type="KEGG" id="bcj:BCAL0956"/>
<dbReference type="eggNOG" id="COG0045">
    <property type="taxonomic scope" value="Bacteria"/>
</dbReference>
<dbReference type="HOGENOM" id="CLU_037430_0_2_4"/>
<dbReference type="BioCyc" id="BCEN216591:G1G1V-1057-MONOMER"/>
<dbReference type="UniPathway" id="UPA00223">
    <property type="reaction ID" value="UER00999"/>
</dbReference>
<dbReference type="Proteomes" id="UP000001035">
    <property type="component" value="Chromosome 1"/>
</dbReference>
<dbReference type="GO" id="GO:0005829">
    <property type="term" value="C:cytosol"/>
    <property type="evidence" value="ECO:0007669"/>
    <property type="project" value="TreeGrafter"/>
</dbReference>
<dbReference type="GO" id="GO:0042709">
    <property type="term" value="C:succinate-CoA ligase complex"/>
    <property type="evidence" value="ECO:0007669"/>
    <property type="project" value="TreeGrafter"/>
</dbReference>
<dbReference type="GO" id="GO:0005524">
    <property type="term" value="F:ATP binding"/>
    <property type="evidence" value="ECO:0007669"/>
    <property type="project" value="UniProtKB-UniRule"/>
</dbReference>
<dbReference type="GO" id="GO:0000287">
    <property type="term" value="F:magnesium ion binding"/>
    <property type="evidence" value="ECO:0007669"/>
    <property type="project" value="UniProtKB-UniRule"/>
</dbReference>
<dbReference type="GO" id="GO:0004775">
    <property type="term" value="F:succinate-CoA ligase (ADP-forming) activity"/>
    <property type="evidence" value="ECO:0007669"/>
    <property type="project" value="UniProtKB-UniRule"/>
</dbReference>
<dbReference type="GO" id="GO:0004776">
    <property type="term" value="F:succinate-CoA ligase (GDP-forming) activity"/>
    <property type="evidence" value="ECO:0007669"/>
    <property type="project" value="RHEA"/>
</dbReference>
<dbReference type="GO" id="GO:0006104">
    <property type="term" value="P:succinyl-CoA metabolic process"/>
    <property type="evidence" value="ECO:0007669"/>
    <property type="project" value="TreeGrafter"/>
</dbReference>
<dbReference type="GO" id="GO:0006099">
    <property type="term" value="P:tricarboxylic acid cycle"/>
    <property type="evidence" value="ECO:0007669"/>
    <property type="project" value="UniProtKB-UniRule"/>
</dbReference>
<dbReference type="FunFam" id="3.30.1490.20:FF:000002">
    <property type="entry name" value="Succinate--CoA ligase [ADP-forming] subunit beta"/>
    <property type="match status" value="1"/>
</dbReference>
<dbReference type="FunFam" id="3.30.470.20:FF:000002">
    <property type="entry name" value="Succinate--CoA ligase [ADP-forming] subunit beta"/>
    <property type="match status" value="1"/>
</dbReference>
<dbReference type="FunFam" id="3.40.50.261:FF:000001">
    <property type="entry name" value="Succinate--CoA ligase [ADP-forming] subunit beta"/>
    <property type="match status" value="1"/>
</dbReference>
<dbReference type="Gene3D" id="3.30.1490.20">
    <property type="entry name" value="ATP-grasp fold, A domain"/>
    <property type="match status" value="1"/>
</dbReference>
<dbReference type="Gene3D" id="3.30.470.20">
    <property type="entry name" value="ATP-grasp fold, B domain"/>
    <property type="match status" value="1"/>
</dbReference>
<dbReference type="Gene3D" id="3.40.50.261">
    <property type="entry name" value="Succinyl-CoA synthetase domains"/>
    <property type="match status" value="1"/>
</dbReference>
<dbReference type="HAMAP" id="MF_00558">
    <property type="entry name" value="Succ_CoA_beta"/>
    <property type="match status" value="1"/>
</dbReference>
<dbReference type="InterPro" id="IPR011761">
    <property type="entry name" value="ATP-grasp"/>
</dbReference>
<dbReference type="InterPro" id="IPR013650">
    <property type="entry name" value="ATP-grasp_succ-CoA_synth-type"/>
</dbReference>
<dbReference type="InterPro" id="IPR013815">
    <property type="entry name" value="ATP_grasp_subdomain_1"/>
</dbReference>
<dbReference type="InterPro" id="IPR017866">
    <property type="entry name" value="Succ-CoA_synthase_bsu_CS"/>
</dbReference>
<dbReference type="InterPro" id="IPR005811">
    <property type="entry name" value="SUCC_ACL_C"/>
</dbReference>
<dbReference type="InterPro" id="IPR005809">
    <property type="entry name" value="Succ_CoA_ligase-like_bsu"/>
</dbReference>
<dbReference type="InterPro" id="IPR016102">
    <property type="entry name" value="Succinyl-CoA_synth-like"/>
</dbReference>
<dbReference type="NCBIfam" id="NF001913">
    <property type="entry name" value="PRK00696.1"/>
    <property type="match status" value="1"/>
</dbReference>
<dbReference type="NCBIfam" id="TIGR01016">
    <property type="entry name" value="sucCoAbeta"/>
    <property type="match status" value="1"/>
</dbReference>
<dbReference type="PANTHER" id="PTHR11815:SF10">
    <property type="entry name" value="SUCCINATE--COA LIGASE [GDP-FORMING] SUBUNIT BETA, MITOCHONDRIAL"/>
    <property type="match status" value="1"/>
</dbReference>
<dbReference type="PANTHER" id="PTHR11815">
    <property type="entry name" value="SUCCINYL-COA SYNTHETASE BETA CHAIN"/>
    <property type="match status" value="1"/>
</dbReference>
<dbReference type="Pfam" id="PF08442">
    <property type="entry name" value="ATP-grasp_2"/>
    <property type="match status" value="1"/>
</dbReference>
<dbReference type="Pfam" id="PF00549">
    <property type="entry name" value="Ligase_CoA"/>
    <property type="match status" value="1"/>
</dbReference>
<dbReference type="PIRSF" id="PIRSF001554">
    <property type="entry name" value="SucCS_beta"/>
    <property type="match status" value="1"/>
</dbReference>
<dbReference type="SUPFAM" id="SSF56059">
    <property type="entry name" value="Glutathione synthetase ATP-binding domain-like"/>
    <property type="match status" value="1"/>
</dbReference>
<dbReference type="SUPFAM" id="SSF52210">
    <property type="entry name" value="Succinyl-CoA synthetase domains"/>
    <property type="match status" value="1"/>
</dbReference>
<dbReference type="PROSITE" id="PS50975">
    <property type="entry name" value="ATP_GRASP"/>
    <property type="match status" value="1"/>
</dbReference>
<dbReference type="PROSITE" id="PS01217">
    <property type="entry name" value="SUCCINYL_COA_LIG_3"/>
    <property type="match status" value="1"/>
</dbReference>
<proteinExistence type="inferred from homology"/>
<sequence>MKIHEYQGKEILRKFGVAVPRGKPAFSVDEAVKVAEELGGPVWVVKAQIHAGGRGKGGGVKVAKSIEQVREYANQILGMQLVTHQTGPEGQKVNRLMIEEGADIKQELYVSLVVDRVSQKIVLMGSSEGGMDIEEVAEKHPELIHKVIVEPSTGLLDAQADDLAAKIGVPAASIPQARAILQGLYKAFWETDASLAEINPLNVSGDGKVTALDAKFNFDSNALFRHPEIVAYRDLDEEDPAEIEASKFDLAYISLDGNIGCLVNGAGLAMATMDTIKLFGGEPANFLDVGGGATTEKVTEAFKLMLKNPGLKAILVNIFGGIMRCDVIAEGVIAGSKAVNLNVPLVVRMKGTNEDLGKKMLADSGLPIISADSMEEAAQKVVAAAAGK</sequence>
<name>SUCC_BURCJ</name>
<evidence type="ECO:0000255" key="1">
    <source>
        <dbReference type="HAMAP-Rule" id="MF_00558"/>
    </source>
</evidence>
<protein>
    <recommendedName>
        <fullName evidence="1">Succinate--CoA ligase [ADP-forming] subunit beta</fullName>
        <ecNumber evidence="1">6.2.1.5</ecNumber>
    </recommendedName>
    <alternativeName>
        <fullName evidence="1">Succinyl-CoA synthetase subunit beta</fullName>
        <shortName evidence="1">SCS-beta</shortName>
    </alternativeName>
</protein>
<accession>B4EBY6</accession>
<keyword id="KW-0067">ATP-binding</keyword>
<keyword id="KW-0436">Ligase</keyword>
<keyword id="KW-0460">Magnesium</keyword>
<keyword id="KW-0479">Metal-binding</keyword>
<keyword id="KW-0547">Nucleotide-binding</keyword>
<keyword id="KW-0816">Tricarboxylic acid cycle</keyword>